<feature type="chain" id="PRO_1000148252" description="Phosphopentomutase">
    <location>
        <begin position="1"/>
        <end position="403"/>
    </location>
</feature>
<feature type="binding site" evidence="1">
    <location>
        <position position="13"/>
    </location>
    <ligand>
        <name>Mn(2+)</name>
        <dbReference type="ChEBI" id="CHEBI:29035"/>
        <label>1</label>
    </ligand>
</feature>
<feature type="binding site" evidence="1">
    <location>
        <position position="298"/>
    </location>
    <ligand>
        <name>Mn(2+)</name>
        <dbReference type="ChEBI" id="CHEBI:29035"/>
        <label>2</label>
    </ligand>
</feature>
<feature type="binding site" evidence="1">
    <location>
        <position position="303"/>
    </location>
    <ligand>
        <name>Mn(2+)</name>
        <dbReference type="ChEBI" id="CHEBI:29035"/>
        <label>2</label>
    </ligand>
</feature>
<feature type="binding site" evidence="1">
    <location>
        <position position="339"/>
    </location>
    <ligand>
        <name>Mn(2+)</name>
        <dbReference type="ChEBI" id="CHEBI:29035"/>
        <label>1</label>
    </ligand>
</feature>
<feature type="binding site" evidence="1">
    <location>
        <position position="340"/>
    </location>
    <ligand>
        <name>Mn(2+)</name>
        <dbReference type="ChEBI" id="CHEBI:29035"/>
        <label>1</label>
    </ligand>
</feature>
<feature type="binding site" evidence="1">
    <location>
        <position position="351"/>
    </location>
    <ligand>
        <name>Mn(2+)</name>
        <dbReference type="ChEBI" id="CHEBI:29035"/>
        <label>2</label>
    </ligand>
</feature>
<protein>
    <recommendedName>
        <fullName evidence="1">Phosphopentomutase</fullName>
        <ecNumber evidence="1">5.4.2.7</ecNumber>
    </recommendedName>
    <alternativeName>
        <fullName evidence="1">Phosphodeoxyribomutase</fullName>
    </alternativeName>
</protein>
<evidence type="ECO:0000255" key="1">
    <source>
        <dbReference type="HAMAP-Rule" id="MF_00740"/>
    </source>
</evidence>
<reference key="1">
    <citation type="journal article" date="2009" name="PLoS Pathog.">
        <title>Genomic evidence for the evolution of Streptococcus equi: host restriction, increased virulence, and genetic exchange with human pathogens.</title>
        <authorList>
            <person name="Holden M.T.G."/>
            <person name="Heather Z."/>
            <person name="Paillot R."/>
            <person name="Steward K.F."/>
            <person name="Webb K."/>
            <person name="Ainslie F."/>
            <person name="Jourdan T."/>
            <person name="Bason N.C."/>
            <person name="Holroyd N.E."/>
            <person name="Mungall K."/>
            <person name="Quail M.A."/>
            <person name="Sanders M."/>
            <person name="Simmonds M."/>
            <person name="Willey D."/>
            <person name="Brooks K."/>
            <person name="Aanensen D.M."/>
            <person name="Spratt B.G."/>
            <person name="Jolley K.A."/>
            <person name="Maiden M.C.J."/>
            <person name="Kehoe M."/>
            <person name="Chanter N."/>
            <person name="Bentley S.D."/>
            <person name="Robinson C."/>
            <person name="Maskell D.J."/>
            <person name="Parkhill J."/>
            <person name="Waller A.S."/>
        </authorList>
    </citation>
    <scope>NUCLEOTIDE SEQUENCE [LARGE SCALE GENOMIC DNA]</scope>
    <source>
        <strain>4047</strain>
    </source>
</reference>
<keyword id="KW-0963">Cytoplasm</keyword>
<keyword id="KW-0413">Isomerase</keyword>
<keyword id="KW-0464">Manganese</keyword>
<keyword id="KW-0479">Metal-binding</keyword>
<sequence>MSKFNRIHLVVLDSVGIGAAPDADKFFNAGVADTDSDTLGHISETAGLAVPNMAKIGLGHIPRPVPLKTVPAEADPTGYVTKLEEVSLGKDTMTGHWEIMGLNITEPFDTFWDGFPEEIIQKIEAFSGRKVIREANKPYSGTKVIDDFGPRQMETGELIVYTSADPVLQIAAHEEVIPVEELYRICEYARSITLERPALLGRIIARPYIGEPGSFTRTANRRDYAVSPFQDTVLNKLADAGISTYAVGKINDIFNGSGITNDMGHNKSNSHGIDTLIKTLQLPAFTKGLSFTNLVDFDASFGHRRDPEGYRDCLHEFDRRLPEIIANMKDDDLLLITADHGNDPTYAGTDHTREYIPLLAYSASCTGAGVIPQGHFADISATIAENFGVDTAMIGTSFLADLV</sequence>
<dbReference type="EC" id="5.4.2.7" evidence="1"/>
<dbReference type="EMBL" id="FM204883">
    <property type="protein sequence ID" value="CAW94170.1"/>
    <property type="molecule type" value="Genomic_DNA"/>
</dbReference>
<dbReference type="RefSeq" id="WP_012677817.1">
    <property type="nucleotide sequence ID" value="NC_012471.1"/>
</dbReference>
<dbReference type="SMR" id="C0M7X5"/>
<dbReference type="KEGG" id="seu:SEQ_1355"/>
<dbReference type="HOGENOM" id="CLU_053861_0_0_9"/>
<dbReference type="OrthoDB" id="9769930at2"/>
<dbReference type="UniPathway" id="UPA00002">
    <property type="reaction ID" value="UER00467"/>
</dbReference>
<dbReference type="Proteomes" id="UP000001365">
    <property type="component" value="Chromosome"/>
</dbReference>
<dbReference type="GO" id="GO:0005829">
    <property type="term" value="C:cytosol"/>
    <property type="evidence" value="ECO:0007669"/>
    <property type="project" value="TreeGrafter"/>
</dbReference>
<dbReference type="GO" id="GO:0000287">
    <property type="term" value="F:magnesium ion binding"/>
    <property type="evidence" value="ECO:0007669"/>
    <property type="project" value="InterPro"/>
</dbReference>
<dbReference type="GO" id="GO:0030145">
    <property type="term" value="F:manganese ion binding"/>
    <property type="evidence" value="ECO:0007669"/>
    <property type="project" value="UniProtKB-UniRule"/>
</dbReference>
<dbReference type="GO" id="GO:0008973">
    <property type="term" value="F:phosphopentomutase activity"/>
    <property type="evidence" value="ECO:0007669"/>
    <property type="project" value="UniProtKB-UniRule"/>
</dbReference>
<dbReference type="GO" id="GO:0006018">
    <property type="term" value="P:2-deoxyribose 1-phosphate catabolic process"/>
    <property type="evidence" value="ECO:0007669"/>
    <property type="project" value="UniProtKB-UniRule"/>
</dbReference>
<dbReference type="GO" id="GO:0006015">
    <property type="term" value="P:5-phosphoribose 1-diphosphate biosynthetic process"/>
    <property type="evidence" value="ECO:0007669"/>
    <property type="project" value="UniProtKB-UniPathway"/>
</dbReference>
<dbReference type="GO" id="GO:0043094">
    <property type="term" value="P:metabolic compound salvage"/>
    <property type="evidence" value="ECO:0007669"/>
    <property type="project" value="InterPro"/>
</dbReference>
<dbReference type="GO" id="GO:0009117">
    <property type="term" value="P:nucleotide metabolic process"/>
    <property type="evidence" value="ECO:0007669"/>
    <property type="project" value="InterPro"/>
</dbReference>
<dbReference type="CDD" id="cd16009">
    <property type="entry name" value="PPM"/>
    <property type="match status" value="1"/>
</dbReference>
<dbReference type="FunFam" id="3.30.70.1250:FF:000001">
    <property type="entry name" value="Phosphopentomutase"/>
    <property type="match status" value="1"/>
</dbReference>
<dbReference type="Gene3D" id="3.40.720.10">
    <property type="entry name" value="Alkaline Phosphatase, subunit A"/>
    <property type="match status" value="1"/>
</dbReference>
<dbReference type="Gene3D" id="3.30.70.1250">
    <property type="entry name" value="Phosphopentomutase"/>
    <property type="match status" value="1"/>
</dbReference>
<dbReference type="HAMAP" id="MF_00740">
    <property type="entry name" value="Phosphopentomut"/>
    <property type="match status" value="1"/>
</dbReference>
<dbReference type="InterPro" id="IPR017850">
    <property type="entry name" value="Alkaline_phosphatase_core_sf"/>
</dbReference>
<dbReference type="InterPro" id="IPR010045">
    <property type="entry name" value="DeoB"/>
</dbReference>
<dbReference type="InterPro" id="IPR006124">
    <property type="entry name" value="Metalloenzyme"/>
</dbReference>
<dbReference type="InterPro" id="IPR024052">
    <property type="entry name" value="Phosphopentomutase_DeoB_cap_sf"/>
</dbReference>
<dbReference type="NCBIfam" id="TIGR01696">
    <property type="entry name" value="deoB"/>
    <property type="match status" value="1"/>
</dbReference>
<dbReference type="NCBIfam" id="NF003766">
    <property type="entry name" value="PRK05362.1"/>
    <property type="match status" value="1"/>
</dbReference>
<dbReference type="PANTHER" id="PTHR21110">
    <property type="entry name" value="PHOSPHOPENTOMUTASE"/>
    <property type="match status" value="1"/>
</dbReference>
<dbReference type="PANTHER" id="PTHR21110:SF0">
    <property type="entry name" value="PHOSPHOPENTOMUTASE"/>
    <property type="match status" value="1"/>
</dbReference>
<dbReference type="Pfam" id="PF01676">
    <property type="entry name" value="Metalloenzyme"/>
    <property type="match status" value="1"/>
</dbReference>
<dbReference type="PIRSF" id="PIRSF001491">
    <property type="entry name" value="Ppentomutase"/>
    <property type="match status" value="1"/>
</dbReference>
<dbReference type="SUPFAM" id="SSF53649">
    <property type="entry name" value="Alkaline phosphatase-like"/>
    <property type="match status" value="1"/>
</dbReference>
<dbReference type="SUPFAM" id="SSF143856">
    <property type="entry name" value="DeoB insert domain-like"/>
    <property type="match status" value="1"/>
</dbReference>
<comment type="function">
    <text evidence="1">Isomerase that catalyzes the conversion of deoxy-ribose 1-phosphate (dRib-1-P) and ribose 1-phosphate (Rib-1-P) to deoxy-ribose 5-phosphate (dRib-5-P) and ribose 5-phosphate (Rib-5-P), respectively.</text>
</comment>
<comment type="catalytic activity">
    <reaction evidence="1">
        <text>2-deoxy-alpha-D-ribose 1-phosphate = 2-deoxy-D-ribose 5-phosphate</text>
        <dbReference type="Rhea" id="RHEA:27658"/>
        <dbReference type="ChEBI" id="CHEBI:57259"/>
        <dbReference type="ChEBI" id="CHEBI:62877"/>
        <dbReference type="EC" id="5.4.2.7"/>
    </reaction>
</comment>
<comment type="catalytic activity">
    <reaction evidence="1">
        <text>alpha-D-ribose 1-phosphate = D-ribose 5-phosphate</text>
        <dbReference type="Rhea" id="RHEA:18793"/>
        <dbReference type="ChEBI" id="CHEBI:57720"/>
        <dbReference type="ChEBI" id="CHEBI:78346"/>
        <dbReference type="EC" id="5.4.2.7"/>
    </reaction>
</comment>
<comment type="cofactor">
    <cofactor evidence="1">
        <name>Mn(2+)</name>
        <dbReference type="ChEBI" id="CHEBI:29035"/>
    </cofactor>
    <text evidence="1">Binds 2 manganese ions.</text>
</comment>
<comment type="pathway">
    <text evidence="1">Carbohydrate degradation; 2-deoxy-D-ribose 1-phosphate degradation; D-glyceraldehyde 3-phosphate and acetaldehyde from 2-deoxy-alpha-D-ribose 1-phosphate: step 1/2.</text>
</comment>
<comment type="subcellular location">
    <subcellularLocation>
        <location evidence="1">Cytoplasm</location>
    </subcellularLocation>
</comment>
<comment type="similarity">
    <text evidence="1">Belongs to the phosphopentomutase family.</text>
</comment>
<proteinExistence type="inferred from homology"/>
<name>DEOB_STRE4</name>
<organism>
    <name type="scientific">Streptococcus equi subsp. equi (strain 4047)</name>
    <dbReference type="NCBI Taxonomy" id="553482"/>
    <lineage>
        <taxon>Bacteria</taxon>
        <taxon>Bacillati</taxon>
        <taxon>Bacillota</taxon>
        <taxon>Bacilli</taxon>
        <taxon>Lactobacillales</taxon>
        <taxon>Streptococcaceae</taxon>
        <taxon>Streptococcus</taxon>
    </lineage>
</organism>
<accession>C0M7X5</accession>
<gene>
    <name evidence="1" type="primary">deoB</name>
    <name type="ordered locus">SEQ_1355</name>
</gene>